<accession>A4FBA6</accession>
<reference key="1">
    <citation type="journal article" date="2007" name="Nat. Biotechnol.">
        <title>Complete genome sequence of the erythromycin-producing bacterium Saccharopolyspora erythraea NRRL23338.</title>
        <authorList>
            <person name="Oliynyk M."/>
            <person name="Samborskyy M."/>
            <person name="Lester J.B."/>
            <person name="Mironenko T."/>
            <person name="Scott N."/>
            <person name="Dickens S."/>
            <person name="Haydock S.F."/>
            <person name="Leadlay P.F."/>
        </authorList>
    </citation>
    <scope>NUCLEOTIDE SEQUENCE [LARGE SCALE GENOMIC DNA]</scope>
    <source>
        <strain>ATCC 11635 / DSM 40517 / JCM 4748 / NBRC 13426 / NCIMB 8594 / NRRL 2338</strain>
    </source>
</reference>
<feature type="chain" id="PRO_1000002823" description="Crossover junction endodeoxyribonuclease RuvC">
    <location>
        <begin position="1"/>
        <end position="199"/>
    </location>
</feature>
<feature type="active site" evidence="1">
    <location>
        <position position="7"/>
    </location>
</feature>
<feature type="active site" evidence="1">
    <location>
        <position position="68"/>
    </location>
</feature>
<feature type="active site" evidence="1">
    <location>
        <position position="141"/>
    </location>
</feature>
<feature type="binding site" evidence="1">
    <location>
        <position position="7"/>
    </location>
    <ligand>
        <name>Mg(2+)</name>
        <dbReference type="ChEBI" id="CHEBI:18420"/>
        <label>1</label>
    </ligand>
</feature>
<feature type="binding site" evidence="1">
    <location>
        <position position="68"/>
    </location>
    <ligand>
        <name>Mg(2+)</name>
        <dbReference type="ChEBI" id="CHEBI:18420"/>
        <label>2</label>
    </ligand>
</feature>
<feature type="binding site" evidence="1">
    <location>
        <position position="141"/>
    </location>
    <ligand>
        <name>Mg(2+)</name>
        <dbReference type="ChEBI" id="CHEBI:18420"/>
        <label>1</label>
    </ligand>
</feature>
<dbReference type="EC" id="3.1.21.10" evidence="1"/>
<dbReference type="EMBL" id="AM420293">
    <property type="protein sequence ID" value="CAM01331.1"/>
    <property type="molecule type" value="Genomic_DNA"/>
</dbReference>
<dbReference type="RefSeq" id="WP_009948972.1">
    <property type="nucleotide sequence ID" value="NC_009142.1"/>
</dbReference>
<dbReference type="SMR" id="A4FBA6"/>
<dbReference type="STRING" id="405948.SACE_2021"/>
<dbReference type="KEGG" id="sen:SACE_2021"/>
<dbReference type="eggNOG" id="COG0817">
    <property type="taxonomic scope" value="Bacteria"/>
</dbReference>
<dbReference type="HOGENOM" id="CLU_091257_0_2_11"/>
<dbReference type="OrthoDB" id="9805499at2"/>
<dbReference type="Proteomes" id="UP000006728">
    <property type="component" value="Chromosome"/>
</dbReference>
<dbReference type="GO" id="GO:0005737">
    <property type="term" value="C:cytoplasm"/>
    <property type="evidence" value="ECO:0007669"/>
    <property type="project" value="UniProtKB-SubCell"/>
</dbReference>
<dbReference type="GO" id="GO:0048476">
    <property type="term" value="C:Holliday junction resolvase complex"/>
    <property type="evidence" value="ECO:0007669"/>
    <property type="project" value="UniProtKB-UniRule"/>
</dbReference>
<dbReference type="GO" id="GO:0008821">
    <property type="term" value="F:crossover junction DNA endonuclease activity"/>
    <property type="evidence" value="ECO:0007669"/>
    <property type="project" value="UniProtKB-UniRule"/>
</dbReference>
<dbReference type="GO" id="GO:0003677">
    <property type="term" value="F:DNA binding"/>
    <property type="evidence" value="ECO:0007669"/>
    <property type="project" value="UniProtKB-KW"/>
</dbReference>
<dbReference type="GO" id="GO:0000287">
    <property type="term" value="F:magnesium ion binding"/>
    <property type="evidence" value="ECO:0007669"/>
    <property type="project" value="UniProtKB-UniRule"/>
</dbReference>
<dbReference type="GO" id="GO:0006310">
    <property type="term" value="P:DNA recombination"/>
    <property type="evidence" value="ECO:0007669"/>
    <property type="project" value="UniProtKB-UniRule"/>
</dbReference>
<dbReference type="GO" id="GO:0006281">
    <property type="term" value="P:DNA repair"/>
    <property type="evidence" value="ECO:0007669"/>
    <property type="project" value="UniProtKB-UniRule"/>
</dbReference>
<dbReference type="CDD" id="cd16962">
    <property type="entry name" value="RuvC"/>
    <property type="match status" value="1"/>
</dbReference>
<dbReference type="FunFam" id="3.30.420.10:FF:000002">
    <property type="entry name" value="Crossover junction endodeoxyribonuclease RuvC"/>
    <property type="match status" value="1"/>
</dbReference>
<dbReference type="Gene3D" id="3.30.420.10">
    <property type="entry name" value="Ribonuclease H-like superfamily/Ribonuclease H"/>
    <property type="match status" value="1"/>
</dbReference>
<dbReference type="HAMAP" id="MF_00034">
    <property type="entry name" value="RuvC"/>
    <property type="match status" value="1"/>
</dbReference>
<dbReference type="InterPro" id="IPR012337">
    <property type="entry name" value="RNaseH-like_sf"/>
</dbReference>
<dbReference type="InterPro" id="IPR036397">
    <property type="entry name" value="RNaseH_sf"/>
</dbReference>
<dbReference type="InterPro" id="IPR020563">
    <property type="entry name" value="X-over_junc_endoDNase_Mg_BS"/>
</dbReference>
<dbReference type="InterPro" id="IPR002176">
    <property type="entry name" value="X-over_junc_endoDNase_RuvC"/>
</dbReference>
<dbReference type="NCBIfam" id="TIGR00228">
    <property type="entry name" value="ruvC"/>
    <property type="match status" value="1"/>
</dbReference>
<dbReference type="PANTHER" id="PTHR30194">
    <property type="entry name" value="CROSSOVER JUNCTION ENDODEOXYRIBONUCLEASE RUVC"/>
    <property type="match status" value="1"/>
</dbReference>
<dbReference type="PANTHER" id="PTHR30194:SF3">
    <property type="entry name" value="CROSSOVER JUNCTION ENDODEOXYRIBONUCLEASE RUVC"/>
    <property type="match status" value="1"/>
</dbReference>
<dbReference type="Pfam" id="PF02075">
    <property type="entry name" value="RuvC"/>
    <property type="match status" value="1"/>
</dbReference>
<dbReference type="PRINTS" id="PR00696">
    <property type="entry name" value="RSOLVASERUVC"/>
</dbReference>
<dbReference type="SUPFAM" id="SSF53098">
    <property type="entry name" value="Ribonuclease H-like"/>
    <property type="match status" value="1"/>
</dbReference>
<dbReference type="PROSITE" id="PS01321">
    <property type="entry name" value="RUVC"/>
    <property type="match status" value="1"/>
</dbReference>
<proteinExistence type="inferred from homology"/>
<sequence>MRVLGVDPGLTRCGIGVVDGGRGRTVTCVGVGVARTPADQELSARLLGVAEAVDEWLDTHRPEVVAIERVFSQHNVRTVMGTAQVSGIVALAAARRGLPVAFHTPSEVKAAISGSGRADKRQVTTMVTKILGLAEAPKPADAADALALAVCHLWRAPMAGRLAEAEAKAAALARNHKARLKDARQAAAQRAARTGGVQR</sequence>
<organism>
    <name type="scientific">Saccharopolyspora erythraea (strain ATCC 11635 / DSM 40517 / JCM 4748 / NBRC 13426 / NCIMB 8594 / NRRL 2338)</name>
    <dbReference type="NCBI Taxonomy" id="405948"/>
    <lineage>
        <taxon>Bacteria</taxon>
        <taxon>Bacillati</taxon>
        <taxon>Actinomycetota</taxon>
        <taxon>Actinomycetes</taxon>
        <taxon>Pseudonocardiales</taxon>
        <taxon>Pseudonocardiaceae</taxon>
        <taxon>Saccharopolyspora</taxon>
    </lineage>
</organism>
<keyword id="KW-0963">Cytoplasm</keyword>
<keyword id="KW-0227">DNA damage</keyword>
<keyword id="KW-0233">DNA recombination</keyword>
<keyword id="KW-0234">DNA repair</keyword>
<keyword id="KW-0238">DNA-binding</keyword>
<keyword id="KW-0255">Endonuclease</keyword>
<keyword id="KW-0378">Hydrolase</keyword>
<keyword id="KW-0460">Magnesium</keyword>
<keyword id="KW-0479">Metal-binding</keyword>
<keyword id="KW-0540">Nuclease</keyword>
<keyword id="KW-1185">Reference proteome</keyword>
<gene>
    <name evidence="1" type="primary">ruvC</name>
    <name type="ordered locus">SACE_2021</name>
</gene>
<evidence type="ECO:0000255" key="1">
    <source>
        <dbReference type="HAMAP-Rule" id="MF_00034"/>
    </source>
</evidence>
<comment type="function">
    <text evidence="1">The RuvA-RuvB-RuvC complex processes Holliday junction (HJ) DNA during genetic recombination and DNA repair. Endonuclease that resolves HJ intermediates. Cleaves cruciform DNA by making single-stranded nicks across the HJ at symmetrical positions within the homologous arms, yielding a 5'-phosphate and a 3'-hydroxyl group; requires a central core of homology in the junction. The consensus cleavage sequence is 5'-(A/T)TT(C/G)-3'. Cleavage occurs on the 3'-side of the TT dinucleotide at the point of strand exchange. HJ branch migration catalyzed by RuvA-RuvB allows RuvC to scan DNA until it finds its consensus sequence, where it cleaves and resolves the cruciform DNA.</text>
</comment>
<comment type="catalytic activity">
    <reaction evidence="1">
        <text>Endonucleolytic cleavage at a junction such as a reciprocal single-stranded crossover between two homologous DNA duplexes (Holliday junction).</text>
        <dbReference type="EC" id="3.1.21.10"/>
    </reaction>
</comment>
<comment type="cofactor">
    <cofactor evidence="1">
        <name>Mg(2+)</name>
        <dbReference type="ChEBI" id="CHEBI:18420"/>
    </cofactor>
    <text evidence="1">Binds 2 Mg(2+) ion per subunit.</text>
</comment>
<comment type="subunit">
    <text evidence="1">Homodimer which binds Holliday junction (HJ) DNA. The HJ becomes 2-fold symmetrical on binding to RuvC with unstacked arms; it has a different conformation from HJ DNA in complex with RuvA. In the full resolvosome a probable DNA-RuvA(4)-RuvB(12)-RuvC(2) complex forms which resolves the HJ.</text>
</comment>
<comment type="subcellular location">
    <subcellularLocation>
        <location evidence="1">Cytoplasm</location>
    </subcellularLocation>
</comment>
<comment type="similarity">
    <text evidence="1">Belongs to the RuvC family.</text>
</comment>
<protein>
    <recommendedName>
        <fullName evidence="1">Crossover junction endodeoxyribonuclease RuvC</fullName>
        <ecNumber evidence="1">3.1.21.10</ecNumber>
    </recommendedName>
    <alternativeName>
        <fullName evidence="1">Holliday junction nuclease RuvC</fullName>
    </alternativeName>
    <alternativeName>
        <fullName evidence="1">Holliday junction resolvase RuvC</fullName>
    </alternativeName>
</protein>
<name>RUVC_SACEN</name>